<feature type="chain" id="PRO_0000234788" description="Tyrosine--tRNA ligase">
    <location>
        <begin position="1"/>
        <end position="418"/>
    </location>
</feature>
<feature type="domain" description="S4 RNA-binding" evidence="1">
    <location>
        <begin position="352"/>
        <end position="418"/>
    </location>
</feature>
<feature type="short sequence motif" description="'HIGH' region">
    <location>
        <begin position="39"/>
        <end position="48"/>
    </location>
</feature>
<feature type="short sequence motif" description="'KMSKS' region">
    <location>
        <begin position="229"/>
        <end position="233"/>
    </location>
</feature>
<feature type="binding site" evidence="1">
    <location>
        <position position="34"/>
    </location>
    <ligand>
        <name>L-tyrosine</name>
        <dbReference type="ChEBI" id="CHEBI:58315"/>
    </ligand>
</feature>
<feature type="binding site" evidence="1">
    <location>
        <position position="169"/>
    </location>
    <ligand>
        <name>L-tyrosine</name>
        <dbReference type="ChEBI" id="CHEBI:58315"/>
    </ligand>
</feature>
<feature type="binding site" evidence="1">
    <location>
        <position position="173"/>
    </location>
    <ligand>
        <name>L-tyrosine</name>
        <dbReference type="ChEBI" id="CHEBI:58315"/>
    </ligand>
</feature>
<feature type="binding site" evidence="1">
    <location>
        <position position="232"/>
    </location>
    <ligand>
        <name>ATP</name>
        <dbReference type="ChEBI" id="CHEBI:30616"/>
    </ligand>
</feature>
<reference key="1">
    <citation type="journal article" date="2001" name="Science">
        <title>Complete genome sequence of a virulent isolate of Streptococcus pneumoniae.</title>
        <authorList>
            <person name="Tettelin H."/>
            <person name="Nelson K.E."/>
            <person name="Paulsen I.T."/>
            <person name="Eisen J.A."/>
            <person name="Read T.D."/>
            <person name="Peterson S.N."/>
            <person name="Heidelberg J.F."/>
            <person name="DeBoy R.T."/>
            <person name="Haft D.H."/>
            <person name="Dodson R.J."/>
            <person name="Durkin A.S."/>
            <person name="Gwinn M.L."/>
            <person name="Kolonay J.F."/>
            <person name="Nelson W.C."/>
            <person name="Peterson J.D."/>
            <person name="Umayam L.A."/>
            <person name="White O."/>
            <person name="Salzberg S.L."/>
            <person name="Lewis M.R."/>
            <person name="Radune D."/>
            <person name="Holtzapple E.K."/>
            <person name="Khouri H.M."/>
            <person name="Wolf A.M."/>
            <person name="Utterback T.R."/>
            <person name="Hansen C.L."/>
            <person name="McDonald L.A."/>
            <person name="Feldblyum T.V."/>
            <person name="Angiuoli S.V."/>
            <person name="Dickinson T."/>
            <person name="Hickey E.K."/>
            <person name="Holt I.E."/>
            <person name="Loftus B.J."/>
            <person name="Yang F."/>
            <person name="Smith H.O."/>
            <person name="Venter J.C."/>
            <person name="Dougherty B.A."/>
            <person name="Morrison D.A."/>
            <person name="Hollingshead S.K."/>
            <person name="Fraser C.M."/>
        </authorList>
    </citation>
    <scope>NUCLEOTIDE SEQUENCE [LARGE SCALE GENOMIC DNA]</scope>
    <source>
        <strain>ATCC BAA-334 / TIGR4</strain>
    </source>
</reference>
<sequence>MHIFDELKERGLIFQTTDEEALRKALEEGQVSYYTGYDPTADSLHLGHLVAILTSRRLQLAGHKPYALVGGATGLIGDPSFKDAERSLQTKDTVDGWVKSIQGQLSRFLDFENGENKAVMVNNYDWFGSISFIDFLRDIGKYFTVNYMMSKESVKKRIETGISYTEFAYQIMQGYDFFVLNQDHNVTLQIGGSDQWGNMTAGTELLRRKADKTGHVITVPLITDATGKKFGKSEGNAVWLNPEKTSPYEMYQFWMNVMDADAVRFLKIFTFLSLDEIEDIRKQFEAAPHERLAQKVLAREVVTLVHGEEAYKEALNITEQLFAGNIKNLSVKELKQGLRGVPNYQVQADENNNIVELLVSSGIVNSKRQAREDVQNGAIYVNGDRIQELDYVLSDADKLENELTVIRRGKKKYFVLTY</sequence>
<name>SYY_STRPN</name>
<gene>
    <name evidence="1" type="primary">tyrS</name>
    <name type="ordered locus">SP_2100</name>
</gene>
<keyword id="KW-0030">Aminoacyl-tRNA synthetase</keyword>
<keyword id="KW-0067">ATP-binding</keyword>
<keyword id="KW-0963">Cytoplasm</keyword>
<keyword id="KW-0436">Ligase</keyword>
<keyword id="KW-0547">Nucleotide-binding</keyword>
<keyword id="KW-0648">Protein biosynthesis</keyword>
<keyword id="KW-1185">Reference proteome</keyword>
<keyword id="KW-0694">RNA-binding</keyword>
<protein>
    <recommendedName>
        <fullName evidence="1">Tyrosine--tRNA ligase</fullName>
        <ecNumber evidence="1">6.1.1.1</ecNumber>
    </recommendedName>
    <alternativeName>
        <fullName evidence="1">Tyrosyl-tRNA synthetase</fullName>
        <shortName evidence="1">TyrRS</shortName>
    </alternativeName>
</protein>
<proteinExistence type="evidence at protein level"/>
<accession>Q97NE3</accession>
<evidence type="ECO:0000255" key="1">
    <source>
        <dbReference type="HAMAP-Rule" id="MF_02006"/>
    </source>
</evidence>
<organism>
    <name type="scientific">Streptococcus pneumoniae serotype 4 (strain ATCC BAA-334 / TIGR4)</name>
    <dbReference type="NCBI Taxonomy" id="170187"/>
    <lineage>
        <taxon>Bacteria</taxon>
        <taxon>Bacillati</taxon>
        <taxon>Bacillota</taxon>
        <taxon>Bacilli</taxon>
        <taxon>Lactobacillales</taxon>
        <taxon>Streptococcaceae</taxon>
        <taxon>Streptococcus</taxon>
    </lineage>
</organism>
<comment type="function">
    <text evidence="1">Catalyzes the attachment of tyrosine to tRNA(Tyr) in a two-step reaction: tyrosine is first activated by ATP to form Tyr-AMP and then transferred to the acceptor end of tRNA(Tyr).</text>
</comment>
<comment type="catalytic activity">
    <reaction evidence="1">
        <text>tRNA(Tyr) + L-tyrosine + ATP = L-tyrosyl-tRNA(Tyr) + AMP + diphosphate + H(+)</text>
        <dbReference type="Rhea" id="RHEA:10220"/>
        <dbReference type="Rhea" id="RHEA-COMP:9706"/>
        <dbReference type="Rhea" id="RHEA-COMP:9707"/>
        <dbReference type="ChEBI" id="CHEBI:15378"/>
        <dbReference type="ChEBI" id="CHEBI:30616"/>
        <dbReference type="ChEBI" id="CHEBI:33019"/>
        <dbReference type="ChEBI" id="CHEBI:58315"/>
        <dbReference type="ChEBI" id="CHEBI:78442"/>
        <dbReference type="ChEBI" id="CHEBI:78536"/>
        <dbReference type="ChEBI" id="CHEBI:456215"/>
        <dbReference type="EC" id="6.1.1.1"/>
    </reaction>
</comment>
<comment type="subunit">
    <text evidence="1">Homodimer.</text>
</comment>
<comment type="interaction">
    <interactant intactId="EBI-6472146">
        <id>Q97NE3</id>
    </interactant>
    <interactant intactId="EBI-6472153">
        <id>A0A0H2URF0</id>
        <label>SP_1851</label>
    </interactant>
    <organismsDiffer>false</organismsDiffer>
    <experiments>4</experiments>
</comment>
<comment type="subcellular location">
    <subcellularLocation>
        <location evidence="1">Cytoplasm</location>
    </subcellularLocation>
</comment>
<comment type="similarity">
    <text evidence="1">Belongs to the class-I aminoacyl-tRNA synthetase family. TyrS type 1 subfamily.</text>
</comment>
<dbReference type="EC" id="6.1.1.1" evidence="1"/>
<dbReference type="EMBL" id="AE005672">
    <property type="protein sequence ID" value="AAK76159.1"/>
    <property type="molecule type" value="Genomic_DNA"/>
</dbReference>
<dbReference type="PIR" id="F95245">
    <property type="entry name" value="F95245"/>
</dbReference>
<dbReference type="RefSeq" id="WP_000546887.1">
    <property type="nucleotide sequence ID" value="NZ_CP155539.1"/>
</dbReference>
<dbReference type="SMR" id="Q97NE3"/>
<dbReference type="IntAct" id="Q97NE3">
    <property type="interactions" value="1"/>
</dbReference>
<dbReference type="PaxDb" id="170187-SP_2100"/>
<dbReference type="EnsemblBacteria" id="AAK76159">
    <property type="protein sequence ID" value="AAK76159"/>
    <property type="gene ID" value="SP_2100"/>
</dbReference>
<dbReference type="KEGG" id="spn:SP_2100"/>
<dbReference type="eggNOG" id="COG0162">
    <property type="taxonomic scope" value="Bacteria"/>
</dbReference>
<dbReference type="PhylomeDB" id="Q97NE3"/>
<dbReference type="BioCyc" id="SPNE170187:G1FZB-2186-MONOMER"/>
<dbReference type="Proteomes" id="UP000000585">
    <property type="component" value="Chromosome"/>
</dbReference>
<dbReference type="GO" id="GO:0005829">
    <property type="term" value="C:cytosol"/>
    <property type="evidence" value="ECO:0007669"/>
    <property type="project" value="TreeGrafter"/>
</dbReference>
<dbReference type="GO" id="GO:0005524">
    <property type="term" value="F:ATP binding"/>
    <property type="evidence" value="ECO:0007669"/>
    <property type="project" value="UniProtKB-UniRule"/>
</dbReference>
<dbReference type="GO" id="GO:0003723">
    <property type="term" value="F:RNA binding"/>
    <property type="evidence" value="ECO:0007669"/>
    <property type="project" value="UniProtKB-KW"/>
</dbReference>
<dbReference type="GO" id="GO:0004831">
    <property type="term" value="F:tyrosine-tRNA ligase activity"/>
    <property type="evidence" value="ECO:0007669"/>
    <property type="project" value="UniProtKB-UniRule"/>
</dbReference>
<dbReference type="GO" id="GO:0006437">
    <property type="term" value="P:tyrosyl-tRNA aminoacylation"/>
    <property type="evidence" value="ECO:0007669"/>
    <property type="project" value="UniProtKB-UniRule"/>
</dbReference>
<dbReference type="CDD" id="cd00165">
    <property type="entry name" value="S4"/>
    <property type="match status" value="1"/>
</dbReference>
<dbReference type="CDD" id="cd00805">
    <property type="entry name" value="TyrRS_core"/>
    <property type="match status" value="1"/>
</dbReference>
<dbReference type="FunFam" id="1.10.240.10:FF:000001">
    <property type="entry name" value="Tyrosine--tRNA ligase"/>
    <property type="match status" value="1"/>
</dbReference>
<dbReference type="FunFam" id="3.10.290.10:FF:000012">
    <property type="entry name" value="Tyrosine--tRNA ligase"/>
    <property type="match status" value="1"/>
</dbReference>
<dbReference type="FunFam" id="3.40.50.620:FF:000008">
    <property type="entry name" value="Tyrosine--tRNA ligase"/>
    <property type="match status" value="1"/>
</dbReference>
<dbReference type="Gene3D" id="3.40.50.620">
    <property type="entry name" value="HUPs"/>
    <property type="match status" value="1"/>
</dbReference>
<dbReference type="Gene3D" id="3.10.290.10">
    <property type="entry name" value="RNA-binding S4 domain"/>
    <property type="match status" value="1"/>
</dbReference>
<dbReference type="Gene3D" id="1.10.240.10">
    <property type="entry name" value="Tyrosyl-Transfer RNA Synthetase"/>
    <property type="match status" value="1"/>
</dbReference>
<dbReference type="HAMAP" id="MF_02006">
    <property type="entry name" value="Tyr_tRNA_synth_type1"/>
    <property type="match status" value="1"/>
</dbReference>
<dbReference type="InterPro" id="IPR001412">
    <property type="entry name" value="aa-tRNA-synth_I_CS"/>
</dbReference>
<dbReference type="InterPro" id="IPR002305">
    <property type="entry name" value="aa-tRNA-synth_Ic"/>
</dbReference>
<dbReference type="InterPro" id="IPR014729">
    <property type="entry name" value="Rossmann-like_a/b/a_fold"/>
</dbReference>
<dbReference type="InterPro" id="IPR002942">
    <property type="entry name" value="S4_RNA-bd"/>
</dbReference>
<dbReference type="InterPro" id="IPR036986">
    <property type="entry name" value="S4_RNA-bd_sf"/>
</dbReference>
<dbReference type="InterPro" id="IPR054608">
    <property type="entry name" value="SYY-like_C"/>
</dbReference>
<dbReference type="InterPro" id="IPR002307">
    <property type="entry name" value="Tyr-tRNA-ligase"/>
</dbReference>
<dbReference type="InterPro" id="IPR024088">
    <property type="entry name" value="Tyr-tRNA-ligase_bac-type"/>
</dbReference>
<dbReference type="InterPro" id="IPR024107">
    <property type="entry name" value="Tyr-tRNA-ligase_bac_1"/>
</dbReference>
<dbReference type="NCBIfam" id="TIGR00234">
    <property type="entry name" value="tyrS"/>
    <property type="match status" value="1"/>
</dbReference>
<dbReference type="PANTHER" id="PTHR11766:SF0">
    <property type="entry name" value="TYROSINE--TRNA LIGASE, MITOCHONDRIAL"/>
    <property type="match status" value="1"/>
</dbReference>
<dbReference type="PANTHER" id="PTHR11766">
    <property type="entry name" value="TYROSYL-TRNA SYNTHETASE"/>
    <property type="match status" value="1"/>
</dbReference>
<dbReference type="Pfam" id="PF22421">
    <property type="entry name" value="SYY_C-terminal"/>
    <property type="match status" value="1"/>
</dbReference>
<dbReference type="Pfam" id="PF00579">
    <property type="entry name" value="tRNA-synt_1b"/>
    <property type="match status" value="1"/>
</dbReference>
<dbReference type="PRINTS" id="PR01040">
    <property type="entry name" value="TRNASYNTHTYR"/>
</dbReference>
<dbReference type="SMART" id="SM00363">
    <property type="entry name" value="S4"/>
    <property type="match status" value="1"/>
</dbReference>
<dbReference type="SUPFAM" id="SSF55174">
    <property type="entry name" value="Alpha-L RNA-binding motif"/>
    <property type="match status" value="1"/>
</dbReference>
<dbReference type="SUPFAM" id="SSF52374">
    <property type="entry name" value="Nucleotidylyl transferase"/>
    <property type="match status" value="1"/>
</dbReference>
<dbReference type="PROSITE" id="PS00178">
    <property type="entry name" value="AA_TRNA_LIGASE_I"/>
    <property type="match status" value="1"/>
</dbReference>
<dbReference type="PROSITE" id="PS50889">
    <property type="entry name" value="S4"/>
    <property type="match status" value="1"/>
</dbReference>